<protein>
    <recommendedName>
        <fullName evidence="1">Uncharacterized N-acetyltransferase BCAH820_3936</fullName>
        <ecNumber evidence="1">2.3.1.-</ecNumber>
    </recommendedName>
</protein>
<gene>
    <name type="ordered locus">BCAH820_3936</name>
</gene>
<keyword id="KW-0012">Acyltransferase</keyword>
<keyword id="KW-0808">Transferase</keyword>
<organism>
    <name type="scientific">Bacillus cereus (strain AH820)</name>
    <dbReference type="NCBI Taxonomy" id="405535"/>
    <lineage>
        <taxon>Bacteria</taxon>
        <taxon>Bacillati</taxon>
        <taxon>Bacillota</taxon>
        <taxon>Bacilli</taxon>
        <taxon>Bacillales</taxon>
        <taxon>Bacillaceae</taxon>
        <taxon>Bacillus</taxon>
        <taxon>Bacillus cereus group</taxon>
    </lineage>
</organism>
<sequence length="157" mass="17938">MGFPKVERLLINYKTLDEFKKFKGCGAQELSMLEELQANIIENDSESPFYGIYYGGSLIARMSLYMKRNGGEPFEITGTYLELYKLEVLPNFQKQGFGEMLVNYAKGLQFPIKTIARIHSAGFWDKLNFQPVSVPDGDFYVWHPETNLNAVTNEESA</sequence>
<name>Y3936_BACC0</name>
<proteinExistence type="inferred from homology"/>
<evidence type="ECO:0000255" key="1">
    <source>
        <dbReference type="HAMAP-Rule" id="MF_00824"/>
    </source>
</evidence>
<feature type="chain" id="PRO_1000191221" description="Uncharacterized N-acetyltransferase BCAH820_3936">
    <location>
        <begin position="1"/>
        <end position="157"/>
    </location>
</feature>
<feature type="domain" description="N-acetyltransferase" evidence="1">
    <location>
        <begin position="9"/>
        <end position="146"/>
    </location>
</feature>
<accession>B7JK09</accession>
<reference key="1">
    <citation type="submission" date="2008-10" db="EMBL/GenBank/DDBJ databases">
        <title>Genome sequence of Bacillus cereus AH820.</title>
        <authorList>
            <person name="Dodson R.J."/>
            <person name="Durkin A.S."/>
            <person name="Rosovitz M.J."/>
            <person name="Rasko D.A."/>
            <person name="Hoffmaster A."/>
            <person name="Ravel J."/>
            <person name="Sutton G."/>
        </authorList>
    </citation>
    <scope>NUCLEOTIDE SEQUENCE [LARGE SCALE GENOMIC DNA]</scope>
    <source>
        <strain>AH820</strain>
    </source>
</reference>
<dbReference type="EC" id="2.3.1.-" evidence="1"/>
<dbReference type="EMBL" id="CP001283">
    <property type="protein sequence ID" value="ACK89550.1"/>
    <property type="molecule type" value="Genomic_DNA"/>
</dbReference>
<dbReference type="RefSeq" id="WP_000506700.1">
    <property type="nucleotide sequence ID" value="NC_011773.1"/>
</dbReference>
<dbReference type="SMR" id="B7JK09"/>
<dbReference type="KEGG" id="bcu:BCAH820_3936"/>
<dbReference type="HOGENOM" id="CLU_136634_0_0_9"/>
<dbReference type="Proteomes" id="UP000001363">
    <property type="component" value="Chromosome"/>
</dbReference>
<dbReference type="GO" id="GO:0016747">
    <property type="term" value="F:acyltransferase activity, transferring groups other than amino-acyl groups"/>
    <property type="evidence" value="ECO:0007669"/>
    <property type="project" value="UniProtKB-UniRule"/>
</dbReference>
<dbReference type="CDD" id="cd04301">
    <property type="entry name" value="NAT_SF"/>
    <property type="match status" value="1"/>
</dbReference>
<dbReference type="Gene3D" id="3.40.630.30">
    <property type="match status" value="1"/>
</dbReference>
<dbReference type="HAMAP" id="MF_00824">
    <property type="entry name" value="Acetyltransf_YlbP"/>
    <property type="match status" value="1"/>
</dbReference>
<dbReference type="InterPro" id="IPR016181">
    <property type="entry name" value="Acyl_CoA_acyltransferase"/>
</dbReference>
<dbReference type="InterPro" id="IPR000182">
    <property type="entry name" value="GNAT_dom"/>
</dbReference>
<dbReference type="InterPro" id="IPR017274">
    <property type="entry name" value="YlbP"/>
</dbReference>
<dbReference type="NCBIfam" id="NF010241">
    <property type="entry name" value="PRK13688.1"/>
    <property type="match status" value="1"/>
</dbReference>
<dbReference type="Pfam" id="PF00583">
    <property type="entry name" value="Acetyltransf_1"/>
    <property type="match status" value="1"/>
</dbReference>
<dbReference type="PIRSF" id="PIRSF037732">
    <property type="entry name" value="YlbP_prd"/>
    <property type="match status" value="1"/>
</dbReference>
<dbReference type="SUPFAM" id="SSF55729">
    <property type="entry name" value="Acyl-CoA N-acyltransferases (Nat)"/>
    <property type="match status" value="1"/>
</dbReference>